<feature type="chain" id="PRO_1000021964" description="RNA pyrophosphohydrolase">
    <location>
        <begin position="1"/>
        <end position="187"/>
    </location>
</feature>
<feature type="domain" description="Nudix hydrolase" evidence="1">
    <location>
        <begin position="6"/>
        <end position="149"/>
    </location>
</feature>
<feature type="short sequence motif" description="Nudix box">
    <location>
        <begin position="38"/>
        <end position="59"/>
    </location>
</feature>
<protein>
    <recommendedName>
        <fullName evidence="1">RNA pyrophosphohydrolase</fullName>
        <ecNumber evidence="1">3.6.1.-</ecNumber>
    </recommendedName>
    <alternativeName>
        <fullName evidence="1">(Di)nucleoside polyphosphate hydrolase</fullName>
    </alternativeName>
</protein>
<dbReference type="EC" id="3.6.1.-" evidence="1"/>
<dbReference type="EMBL" id="CP000450">
    <property type="protein sequence ID" value="ABI59501.1"/>
    <property type="molecule type" value="Genomic_DNA"/>
</dbReference>
<dbReference type="RefSeq" id="WP_011634320.1">
    <property type="nucleotide sequence ID" value="NC_008344.1"/>
</dbReference>
<dbReference type="SMR" id="Q0AGN1"/>
<dbReference type="STRING" id="335283.Neut_1248"/>
<dbReference type="KEGG" id="net:Neut_1248"/>
<dbReference type="eggNOG" id="COG0494">
    <property type="taxonomic scope" value="Bacteria"/>
</dbReference>
<dbReference type="HOGENOM" id="CLU_087195_3_1_4"/>
<dbReference type="OrthoDB" id="9816040at2"/>
<dbReference type="Proteomes" id="UP000001966">
    <property type="component" value="Chromosome"/>
</dbReference>
<dbReference type="GO" id="GO:0016462">
    <property type="term" value="F:pyrophosphatase activity"/>
    <property type="evidence" value="ECO:0007669"/>
    <property type="project" value="UniProtKB-ARBA"/>
</dbReference>
<dbReference type="CDD" id="cd03671">
    <property type="entry name" value="NUDIX_Ap4A_hydrolase_plant_like"/>
    <property type="match status" value="1"/>
</dbReference>
<dbReference type="Gene3D" id="3.90.79.10">
    <property type="entry name" value="Nucleoside Triphosphate Pyrophosphohydrolase"/>
    <property type="match status" value="1"/>
</dbReference>
<dbReference type="HAMAP" id="MF_00298">
    <property type="entry name" value="Nudix_RppH"/>
    <property type="match status" value="1"/>
</dbReference>
<dbReference type="InterPro" id="IPR020476">
    <property type="entry name" value="Nudix_hydrolase"/>
</dbReference>
<dbReference type="InterPro" id="IPR015797">
    <property type="entry name" value="NUDIX_hydrolase-like_dom_sf"/>
</dbReference>
<dbReference type="InterPro" id="IPR020084">
    <property type="entry name" value="NUDIX_hydrolase_CS"/>
</dbReference>
<dbReference type="InterPro" id="IPR000086">
    <property type="entry name" value="NUDIX_hydrolase_dom"/>
</dbReference>
<dbReference type="InterPro" id="IPR022927">
    <property type="entry name" value="RppH"/>
</dbReference>
<dbReference type="NCBIfam" id="NF001935">
    <property type="entry name" value="PRK00714.1-2"/>
    <property type="match status" value="1"/>
</dbReference>
<dbReference type="NCBIfam" id="NF001937">
    <property type="entry name" value="PRK00714.1-4"/>
    <property type="match status" value="1"/>
</dbReference>
<dbReference type="NCBIfam" id="NF001938">
    <property type="entry name" value="PRK00714.1-5"/>
    <property type="match status" value="1"/>
</dbReference>
<dbReference type="PANTHER" id="PTHR43736">
    <property type="entry name" value="ADP-RIBOSE PYROPHOSPHATASE"/>
    <property type="match status" value="1"/>
</dbReference>
<dbReference type="PANTHER" id="PTHR43736:SF1">
    <property type="entry name" value="DIHYDRONEOPTERIN TRIPHOSPHATE DIPHOSPHATASE"/>
    <property type="match status" value="1"/>
</dbReference>
<dbReference type="Pfam" id="PF00293">
    <property type="entry name" value="NUDIX"/>
    <property type="match status" value="1"/>
</dbReference>
<dbReference type="PRINTS" id="PR00502">
    <property type="entry name" value="NUDIXFAMILY"/>
</dbReference>
<dbReference type="SUPFAM" id="SSF55811">
    <property type="entry name" value="Nudix"/>
    <property type="match status" value="1"/>
</dbReference>
<dbReference type="PROSITE" id="PS51462">
    <property type="entry name" value="NUDIX"/>
    <property type="match status" value="1"/>
</dbReference>
<dbReference type="PROSITE" id="PS00893">
    <property type="entry name" value="NUDIX_BOX"/>
    <property type="match status" value="1"/>
</dbReference>
<comment type="function">
    <text evidence="1">Accelerates the degradation of transcripts by removing pyrophosphate from the 5'-end of triphosphorylated RNA, leading to a more labile monophosphorylated state that can stimulate subsequent ribonuclease cleavage.</text>
</comment>
<comment type="cofactor">
    <cofactor evidence="1">
        <name>a divalent metal cation</name>
        <dbReference type="ChEBI" id="CHEBI:60240"/>
    </cofactor>
</comment>
<comment type="similarity">
    <text evidence="1">Belongs to the Nudix hydrolase family. RppH subfamily.</text>
</comment>
<reference key="1">
    <citation type="journal article" date="2007" name="Environ. Microbiol.">
        <title>Whole-genome analysis of the ammonia-oxidizing bacterium, Nitrosomonas eutropha C91: implications for niche adaptation.</title>
        <authorList>
            <person name="Stein L.Y."/>
            <person name="Arp D.J."/>
            <person name="Berube P.M."/>
            <person name="Chain P.S."/>
            <person name="Hauser L."/>
            <person name="Jetten M.S."/>
            <person name="Klotz M.G."/>
            <person name="Larimer F.W."/>
            <person name="Norton J.M."/>
            <person name="Op den Camp H.J.M."/>
            <person name="Shin M."/>
            <person name="Wei X."/>
        </authorList>
    </citation>
    <scope>NUCLEOTIDE SEQUENCE [LARGE SCALE GENOMIC DNA]</scope>
    <source>
        <strain>DSM 101675 / C91 / Nm57</strain>
    </source>
</reference>
<proteinExistence type="inferred from homology"/>
<organism>
    <name type="scientific">Nitrosomonas eutropha (strain DSM 101675 / C91 / Nm57)</name>
    <dbReference type="NCBI Taxonomy" id="335283"/>
    <lineage>
        <taxon>Bacteria</taxon>
        <taxon>Pseudomonadati</taxon>
        <taxon>Pseudomonadota</taxon>
        <taxon>Betaproteobacteria</taxon>
        <taxon>Nitrosomonadales</taxon>
        <taxon>Nitrosomonadaceae</taxon>
        <taxon>Nitrosomonas</taxon>
    </lineage>
</organism>
<gene>
    <name evidence="1" type="primary">rppH</name>
    <name evidence="1" type="synonym">nudH</name>
    <name type="ordered locus">Neut_1248</name>
</gene>
<name>RPPH_NITEC</name>
<accession>Q0AGN1</accession>
<sequence length="187" mass="22221">MIDRNGYRANVGIILLNSKSQVFWGKRARQNSWQFPQGGIKSGETPTQAMYRELAEETGLQPVHVEILGRTREWLRYDVPACWTRRDWRKNYRGQKQIWFLLRMLGRDCDVSLKTCAHPEFDAWRWNQYWVELESVVEFKRQVYRLALTELSRLLDHETCLGNDQAYREPLEPVKELEEKSSDARQG</sequence>
<keyword id="KW-0378">Hydrolase</keyword>
<evidence type="ECO:0000255" key="1">
    <source>
        <dbReference type="HAMAP-Rule" id="MF_00298"/>
    </source>
</evidence>